<dbReference type="EC" id="2.7.2.8" evidence="1"/>
<dbReference type="EMBL" id="CP000609">
    <property type="protein sequence ID" value="ABO35911.1"/>
    <property type="molecule type" value="Genomic_DNA"/>
</dbReference>
<dbReference type="RefSeq" id="WP_011869358.1">
    <property type="nucleotide sequence ID" value="NC_009135.1"/>
</dbReference>
<dbReference type="SMR" id="A4G0C7"/>
<dbReference type="STRING" id="402880.MmarC5_1614"/>
<dbReference type="GeneID" id="4928146"/>
<dbReference type="KEGG" id="mmq:MmarC5_1614"/>
<dbReference type="eggNOG" id="arCOG00862">
    <property type="taxonomic scope" value="Archaea"/>
</dbReference>
<dbReference type="HOGENOM" id="CLU_053680_0_0_2"/>
<dbReference type="OrthoDB" id="6816at2157"/>
<dbReference type="UniPathway" id="UPA00068">
    <property type="reaction ID" value="UER00107"/>
</dbReference>
<dbReference type="Proteomes" id="UP000000253">
    <property type="component" value="Chromosome"/>
</dbReference>
<dbReference type="GO" id="GO:0005737">
    <property type="term" value="C:cytoplasm"/>
    <property type="evidence" value="ECO:0007669"/>
    <property type="project" value="UniProtKB-SubCell"/>
</dbReference>
<dbReference type="GO" id="GO:0003991">
    <property type="term" value="F:acetylglutamate kinase activity"/>
    <property type="evidence" value="ECO:0007669"/>
    <property type="project" value="UniProtKB-UniRule"/>
</dbReference>
<dbReference type="GO" id="GO:0005524">
    <property type="term" value="F:ATP binding"/>
    <property type="evidence" value="ECO:0007669"/>
    <property type="project" value="UniProtKB-UniRule"/>
</dbReference>
<dbReference type="GO" id="GO:0042450">
    <property type="term" value="P:arginine biosynthetic process via ornithine"/>
    <property type="evidence" value="ECO:0007669"/>
    <property type="project" value="UniProtKB-UniRule"/>
</dbReference>
<dbReference type="GO" id="GO:0006526">
    <property type="term" value="P:L-arginine biosynthetic process"/>
    <property type="evidence" value="ECO:0007669"/>
    <property type="project" value="UniProtKB-UniPathway"/>
</dbReference>
<dbReference type="CDD" id="cd04250">
    <property type="entry name" value="AAK_NAGK-C"/>
    <property type="match status" value="1"/>
</dbReference>
<dbReference type="FunFam" id="3.40.1160.10:FF:000004">
    <property type="entry name" value="Acetylglutamate kinase"/>
    <property type="match status" value="1"/>
</dbReference>
<dbReference type="Gene3D" id="3.40.1160.10">
    <property type="entry name" value="Acetylglutamate kinase-like"/>
    <property type="match status" value="1"/>
</dbReference>
<dbReference type="HAMAP" id="MF_00082">
    <property type="entry name" value="ArgB"/>
    <property type="match status" value="1"/>
</dbReference>
<dbReference type="InterPro" id="IPR036393">
    <property type="entry name" value="AceGlu_kinase-like_sf"/>
</dbReference>
<dbReference type="InterPro" id="IPR004662">
    <property type="entry name" value="AcgluKinase_fam"/>
</dbReference>
<dbReference type="InterPro" id="IPR037528">
    <property type="entry name" value="ArgB"/>
</dbReference>
<dbReference type="InterPro" id="IPR001048">
    <property type="entry name" value="Asp/Glu/Uridylate_kinase"/>
</dbReference>
<dbReference type="InterPro" id="IPR001057">
    <property type="entry name" value="Glu/AcGlu_kinase"/>
</dbReference>
<dbReference type="InterPro" id="IPR041727">
    <property type="entry name" value="NAGK-C"/>
</dbReference>
<dbReference type="NCBIfam" id="TIGR00761">
    <property type="entry name" value="argB"/>
    <property type="match status" value="1"/>
</dbReference>
<dbReference type="PANTHER" id="PTHR23342">
    <property type="entry name" value="N-ACETYLGLUTAMATE SYNTHASE"/>
    <property type="match status" value="1"/>
</dbReference>
<dbReference type="PANTHER" id="PTHR23342:SF0">
    <property type="entry name" value="N-ACETYLGLUTAMATE SYNTHASE, MITOCHONDRIAL"/>
    <property type="match status" value="1"/>
</dbReference>
<dbReference type="Pfam" id="PF00696">
    <property type="entry name" value="AA_kinase"/>
    <property type="match status" value="1"/>
</dbReference>
<dbReference type="PIRSF" id="PIRSF000728">
    <property type="entry name" value="NAGK"/>
    <property type="match status" value="1"/>
</dbReference>
<dbReference type="PRINTS" id="PR00474">
    <property type="entry name" value="GLU5KINASE"/>
</dbReference>
<dbReference type="SUPFAM" id="SSF53633">
    <property type="entry name" value="Carbamate kinase-like"/>
    <property type="match status" value="1"/>
</dbReference>
<comment type="function">
    <text evidence="1">Catalyzes the ATP-dependent phosphorylation of N-acetyl-L-glutamate.</text>
</comment>
<comment type="catalytic activity">
    <reaction evidence="1">
        <text>N-acetyl-L-glutamate + ATP = N-acetyl-L-glutamyl 5-phosphate + ADP</text>
        <dbReference type="Rhea" id="RHEA:14629"/>
        <dbReference type="ChEBI" id="CHEBI:30616"/>
        <dbReference type="ChEBI" id="CHEBI:44337"/>
        <dbReference type="ChEBI" id="CHEBI:57936"/>
        <dbReference type="ChEBI" id="CHEBI:456216"/>
        <dbReference type="EC" id="2.7.2.8"/>
    </reaction>
</comment>
<comment type="pathway">
    <text evidence="1">Amino-acid biosynthesis; L-arginine biosynthesis; N(2)-acetyl-L-ornithine from L-glutamate: step 2/4.</text>
</comment>
<comment type="subcellular location">
    <subcellularLocation>
        <location evidence="1">Cytoplasm</location>
    </subcellularLocation>
</comment>
<comment type="similarity">
    <text evidence="1">Belongs to the acetylglutamate kinase family. ArgB subfamily.</text>
</comment>
<keyword id="KW-0028">Amino-acid biosynthesis</keyword>
<keyword id="KW-0055">Arginine biosynthesis</keyword>
<keyword id="KW-0067">ATP-binding</keyword>
<keyword id="KW-0963">Cytoplasm</keyword>
<keyword id="KW-0418">Kinase</keyword>
<keyword id="KW-0547">Nucleotide-binding</keyword>
<keyword id="KW-0808">Transferase</keyword>
<name>ARGB_METM5</name>
<protein>
    <recommendedName>
        <fullName evidence="1">Acetylglutamate kinase</fullName>
        <ecNumber evidence="1">2.7.2.8</ecNumber>
    </recommendedName>
    <alternativeName>
        <fullName evidence="1">N-acetyl-L-glutamate 5-phosphotransferase</fullName>
    </alternativeName>
    <alternativeName>
        <fullName evidence="1">NAG kinase</fullName>
        <shortName evidence="1">NAGK</shortName>
    </alternativeName>
</protein>
<accession>A4G0C7</accession>
<feature type="chain" id="PRO_1000010507" description="Acetylglutamate kinase">
    <location>
        <begin position="1"/>
        <end position="294"/>
    </location>
</feature>
<feature type="binding site" evidence="1">
    <location>
        <begin position="63"/>
        <end position="64"/>
    </location>
    <ligand>
        <name>substrate</name>
    </ligand>
</feature>
<feature type="binding site" evidence="1">
    <location>
        <position position="85"/>
    </location>
    <ligand>
        <name>substrate</name>
    </ligand>
</feature>
<feature type="binding site" evidence="1">
    <location>
        <position position="188"/>
    </location>
    <ligand>
        <name>substrate</name>
    </ligand>
</feature>
<feature type="site" description="Transition state stabilizer" evidence="1">
    <location>
        <position position="28"/>
    </location>
</feature>
<feature type="site" description="Transition state stabilizer" evidence="1">
    <location>
        <position position="251"/>
    </location>
</feature>
<reference key="1">
    <citation type="submission" date="2007-03" db="EMBL/GenBank/DDBJ databases">
        <title>Complete sequence of chromosome of Methanococcus maripaludis C5.</title>
        <authorList>
            <consortium name="US DOE Joint Genome Institute"/>
            <person name="Copeland A."/>
            <person name="Lucas S."/>
            <person name="Lapidus A."/>
            <person name="Barry K."/>
            <person name="Glavina del Rio T."/>
            <person name="Dalin E."/>
            <person name="Tice H."/>
            <person name="Pitluck S."/>
            <person name="Chertkov O."/>
            <person name="Brettin T."/>
            <person name="Bruce D."/>
            <person name="Han C."/>
            <person name="Detter J.C."/>
            <person name="Schmutz J."/>
            <person name="Larimer F."/>
            <person name="Land M."/>
            <person name="Hauser L."/>
            <person name="Kyrpides N."/>
            <person name="Mikhailova N."/>
            <person name="Sieprawska-Lupa M."/>
            <person name="Whitman W.B."/>
            <person name="Richardson P."/>
        </authorList>
    </citation>
    <scope>NUCLEOTIDE SEQUENCE [LARGE SCALE GENOMIC DNA]</scope>
    <source>
        <strain>C5 / ATCC BAA-1333</strain>
    </source>
</reference>
<organism>
    <name type="scientific">Methanococcus maripaludis (strain C5 / ATCC BAA-1333)</name>
    <dbReference type="NCBI Taxonomy" id="402880"/>
    <lineage>
        <taxon>Archaea</taxon>
        <taxon>Methanobacteriati</taxon>
        <taxon>Methanobacteriota</taxon>
        <taxon>Methanomada group</taxon>
        <taxon>Methanococci</taxon>
        <taxon>Methanococcales</taxon>
        <taxon>Methanococcaceae</taxon>
        <taxon>Methanococcus</taxon>
    </lineage>
</organism>
<sequence length="294" mass="32346">MEDYTKAEILIEALPYICKFHDQKFLIKYGGHAMVNEQARSWIAKDLVLLKYVGINPIVVHGGGPEINRAMEKMGKKPEFIHGLRVTDEETLDIVKMVLIGKINGDIVSKLERYGGKAVGLSGKSGQLIKAKKKIQYLMKDSQKIEVDLGMVGEVEHVDTKLIDILVEKRYIPVISPIGVDHQGNDLNLNADIAAGDIAGAMDAKKLIMVTDVDGIMDDVNDQSTLHRRLTISQIEDMIEKGLITGGMIPKIEACINALDKGVQSVHIVNGKTPHAVLLEIFTEDGVGTMIVRE</sequence>
<evidence type="ECO:0000255" key="1">
    <source>
        <dbReference type="HAMAP-Rule" id="MF_00082"/>
    </source>
</evidence>
<proteinExistence type="inferred from homology"/>
<gene>
    <name evidence="1" type="primary">argB</name>
    <name type="ordered locus">MmarC5_1614</name>
</gene>